<comment type="developmental stage">
    <text evidence="1">Expressed in pstAB cells and in pstA cells, pstO cells, upper and lower cups, and stalk during culmination.</text>
</comment>
<evidence type="ECO:0000269" key="1">
    <source>
    </source>
</evidence>
<organism>
    <name type="scientific">Dictyostelium discoideum</name>
    <name type="common">Social amoeba</name>
    <dbReference type="NCBI Taxonomy" id="44689"/>
    <lineage>
        <taxon>Eukaryota</taxon>
        <taxon>Amoebozoa</taxon>
        <taxon>Evosea</taxon>
        <taxon>Eumycetozoa</taxon>
        <taxon>Dictyostelia</taxon>
        <taxon>Dictyosteliales</taxon>
        <taxon>Dictyosteliaceae</taxon>
        <taxon>Dictyostelium</taxon>
    </lineage>
</organism>
<sequence>MAGPWTLEPGKNYGGIPTWAWPRSTTVHVQVVGGGNGRVRFQAGASPDEDNDVNGETSFSRSFGGFRLNVTNIGSTTLKVWTA</sequence>
<dbReference type="EMBL" id="AAFI02000005">
    <property type="protein sequence ID" value="EAL72201.2"/>
    <property type="molecule type" value="Genomic_DNA"/>
</dbReference>
<dbReference type="RefSeq" id="XP_646205.2">
    <property type="nucleotide sequence ID" value="XM_641113.2"/>
</dbReference>
<dbReference type="FunCoup" id="Q55DC6">
    <property type="interactions" value="87"/>
</dbReference>
<dbReference type="PaxDb" id="44689-DDB0229921"/>
<dbReference type="EnsemblProtists" id="EAL72201">
    <property type="protein sequence ID" value="EAL72201"/>
    <property type="gene ID" value="DDB_G0269702"/>
</dbReference>
<dbReference type="GeneID" id="8617158"/>
<dbReference type="KEGG" id="ddi:DDB_G0269702"/>
<dbReference type="dictyBase" id="DDB_G0269702"/>
<dbReference type="VEuPathDB" id="AmoebaDB:DDB_G0269702"/>
<dbReference type="eggNOG" id="ENOG502RI4G">
    <property type="taxonomic scope" value="Eukaryota"/>
</dbReference>
<dbReference type="HOGENOM" id="CLU_2547329_0_0_1"/>
<dbReference type="InParanoid" id="Q55DC6"/>
<dbReference type="OMA" id="TWPFNTR"/>
<dbReference type="PhylomeDB" id="Q55DC6"/>
<dbReference type="PRO" id="PR:Q55DC6"/>
<dbReference type="Proteomes" id="UP000002195">
    <property type="component" value="Chromosome 1"/>
</dbReference>
<proteinExistence type="evidence at transcript level"/>
<reference key="1">
    <citation type="journal article" date="2005" name="Nature">
        <title>The genome of the social amoeba Dictyostelium discoideum.</title>
        <authorList>
            <person name="Eichinger L."/>
            <person name="Pachebat J.A."/>
            <person name="Gloeckner G."/>
            <person name="Rajandream M.A."/>
            <person name="Sucgang R."/>
            <person name="Berriman M."/>
            <person name="Song J."/>
            <person name="Olsen R."/>
            <person name="Szafranski K."/>
            <person name="Xu Q."/>
            <person name="Tunggal B."/>
            <person name="Kummerfeld S."/>
            <person name="Madera M."/>
            <person name="Konfortov B.A."/>
            <person name="Rivero F."/>
            <person name="Bankier A.T."/>
            <person name="Lehmann R."/>
            <person name="Hamlin N."/>
            <person name="Davies R."/>
            <person name="Gaudet P."/>
            <person name="Fey P."/>
            <person name="Pilcher K."/>
            <person name="Chen G."/>
            <person name="Saunders D."/>
            <person name="Sodergren E.J."/>
            <person name="Davis P."/>
            <person name="Kerhornou A."/>
            <person name="Nie X."/>
            <person name="Hall N."/>
            <person name="Anjard C."/>
            <person name="Hemphill L."/>
            <person name="Bason N."/>
            <person name="Farbrother P."/>
            <person name="Desany B."/>
            <person name="Just E."/>
            <person name="Morio T."/>
            <person name="Rost R."/>
            <person name="Churcher C.M."/>
            <person name="Cooper J."/>
            <person name="Haydock S."/>
            <person name="van Driessche N."/>
            <person name="Cronin A."/>
            <person name="Goodhead I."/>
            <person name="Muzny D.M."/>
            <person name="Mourier T."/>
            <person name="Pain A."/>
            <person name="Lu M."/>
            <person name="Harper D."/>
            <person name="Lindsay R."/>
            <person name="Hauser H."/>
            <person name="James K.D."/>
            <person name="Quiles M."/>
            <person name="Madan Babu M."/>
            <person name="Saito T."/>
            <person name="Buchrieser C."/>
            <person name="Wardroper A."/>
            <person name="Felder M."/>
            <person name="Thangavelu M."/>
            <person name="Johnson D."/>
            <person name="Knights A."/>
            <person name="Loulseged H."/>
            <person name="Mungall K.L."/>
            <person name="Oliver K."/>
            <person name="Price C."/>
            <person name="Quail M.A."/>
            <person name="Urushihara H."/>
            <person name="Hernandez J."/>
            <person name="Rabbinowitsch E."/>
            <person name="Steffen D."/>
            <person name="Sanders M."/>
            <person name="Ma J."/>
            <person name="Kohara Y."/>
            <person name="Sharp S."/>
            <person name="Simmonds M.N."/>
            <person name="Spiegler S."/>
            <person name="Tivey A."/>
            <person name="Sugano S."/>
            <person name="White B."/>
            <person name="Walker D."/>
            <person name="Woodward J.R."/>
            <person name="Winckler T."/>
            <person name="Tanaka Y."/>
            <person name="Shaulsky G."/>
            <person name="Schleicher M."/>
            <person name="Weinstock G.M."/>
            <person name="Rosenthal A."/>
            <person name="Cox E.C."/>
            <person name="Chisholm R.L."/>
            <person name="Gibbs R.A."/>
            <person name="Loomis W.F."/>
            <person name="Platzer M."/>
            <person name="Kay R.R."/>
            <person name="Williams J.G."/>
            <person name="Dear P.H."/>
            <person name="Noegel A.A."/>
            <person name="Barrell B.G."/>
            <person name="Kuspa A."/>
        </authorList>
    </citation>
    <scope>NUCLEOTIDE SEQUENCE [LARGE SCALE GENOMIC DNA]</scope>
    <source>
        <strain>AX4</strain>
    </source>
</reference>
<reference key="2">
    <citation type="journal article" date="2003" name="Eukaryot. Cell">
        <title>Changing patterns of gene expression in Dictyostelium prestalk cell subtypes recognized by in situ hybridization with genes from microarray analyses.</title>
        <authorList>
            <person name="Maeda M."/>
            <person name="Sakamoto H."/>
            <person name="Iranfar N."/>
            <person name="Fuller D."/>
            <person name="Maruo T."/>
            <person name="Ogihara S."/>
            <person name="Morio T."/>
            <person name="Urushihara H."/>
            <person name="Tanaka Y."/>
            <person name="Loomis W.F."/>
        </authorList>
    </citation>
    <scope>DEVELOPMENTAL STAGE [LARGE SCALE ANALYSIS]</scope>
</reference>
<name>Y9702_DICDI</name>
<accession>Q55DC6</accession>
<protein>
    <recommendedName>
        <fullName>Uncharacterized protein DDB_G0269702</fullName>
    </recommendedName>
</protein>
<feature type="chain" id="PRO_0000392669" description="Uncharacterized protein DDB_G0269702">
    <location>
        <begin position="1"/>
        <end position="83"/>
    </location>
</feature>
<keyword id="KW-1185">Reference proteome</keyword>
<gene>
    <name type="ORF">DDB_G0269702</name>
</gene>